<name>Y3569_MYCGI</name>
<comment type="similarity">
    <text evidence="1">Belongs to the UPF0235 family.</text>
</comment>
<gene>
    <name type="ordered locus">Mflv_3569</name>
</gene>
<accession>A4T9S3</accession>
<sequence length="75" mass="8093">MAELISVRVKPGSRKGPLVEAGEDGALTLYVQERAVDGKANEAVTKLLAEHLGVPRSRIELVSGATSRHKRFRIG</sequence>
<reference key="1">
    <citation type="submission" date="2007-04" db="EMBL/GenBank/DDBJ databases">
        <title>Complete sequence of chromosome of Mycobacterium gilvum PYR-GCK.</title>
        <authorList>
            <consortium name="US DOE Joint Genome Institute"/>
            <person name="Copeland A."/>
            <person name="Lucas S."/>
            <person name="Lapidus A."/>
            <person name="Barry K."/>
            <person name="Detter J.C."/>
            <person name="Glavina del Rio T."/>
            <person name="Hammon N."/>
            <person name="Israni S."/>
            <person name="Dalin E."/>
            <person name="Tice H."/>
            <person name="Pitluck S."/>
            <person name="Chain P."/>
            <person name="Malfatti S."/>
            <person name="Shin M."/>
            <person name="Vergez L."/>
            <person name="Schmutz J."/>
            <person name="Larimer F."/>
            <person name="Land M."/>
            <person name="Hauser L."/>
            <person name="Kyrpides N."/>
            <person name="Mikhailova N."/>
            <person name="Miller C."/>
            <person name="Richardson P."/>
        </authorList>
    </citation>
    <scope>NUCLEOTIDE SEQUENCE [LARGE SCALE GENOMIC DNA]</scope>
    <source>
        <strain>PYR-GCK</strain>
    </source>
</reference>
<evidence type="ECO:0000255" key="1">
    <source>
        <dbReference type="HAMAP-Rule" id="MF_00634"/>
    </source>
</evidence>
<proteinExistence type="inferred from homology"/>
<organism>
    <name type="scientific">Mycolicibacterium gilvum (strain PYR-GCK)</name>
    <name type="common">Mycobacterium gilvum (strain PYR-GCK)</name>
    <dbReference type="NCBI Taxonomy" id="350054"/>
    <lineage>
        <taxon>Bacteria</taxon>
        <taxon>Bacillati</taxon>
        <taxon>Actinomycetota</taxon>
        <taxon>Actinomycetes</taxon>
        <taxon>Mycobacteriales</taxon>
        <taxon>Mycobacteriaceae</taxon>
        <taxon>Mycolicibacterium</taxon>
    </lineage>
</organism>
<protein>
    <recommendedName>
        <fullName evidence="1">UPF0235 protein Mflv_3569</fullName>
    </recommendedName>
</protein>
<feature type="chain" id="PRO_1000082642" description="UPF0235 protein Mflv_3569">
    <location>
        <begin position="1"/>
        <end position="75"/>
    </location>
</feature>
<dbReference type="EMBL" id="CP000656">
    <property type="protein sequence ID" value="ABP46043.1"/>
    <property type="molecule type" value="Genomic_DNA"/>
</dbReference>
<dbReference type="SMR" id="A4T9S3"/>
<dbReference type="STRING" id="350054.Mflv_3569"/>
<dbReference type="KEGG" id="mgi:Mflv_3569"/>
<dbReference type="eggNOG" id="COG1872">
    <property type="taxonomic scope" value="Bacteria"/>
</dbReference>
<dbReference type="HOGENOM" id="CLU_130694_5_3_11"/>
<dbReference type="OrthoDB" id="9801878at2"/>
<dbReference type="GO" id="GO:0005737">
    <property type="term" value="C:cytoplasm"/>
    <property type="evidence" value="ECO:0007669"/>
    <property type="project" value="TreeGrafter"/>
</dbReference>
<dbReference type="Gene3D" id="3.30.1200.10">
    <property type="entry name" value="YggU-like"/>
    <property type="match status" value="1"/>
</dbReference>
<dbReference type="HAMAP" id="MF_00634">
    <property type="entry name" value="UPF0235"/>
    <property type="match status" value="1"/>
</dbReference>
<dbReference type="InterPro" id="IPR003746">
    <property type="entry name" value="DUF167"/>
</dbReference>
<dbReference type="InterPro" id="IPR036591">
    <property type="entry name" value="YggU-like_sf"/>
</dbReference>
<dbReference type="NCBIfam" id="TIGR00251">
    <property type="entry name" value="DUF167 family protein"/>
    <property type="match status" value="1"/>
</dbReference>
<dbReference type="PANTHER" id="PTHR13420">
    <property type="entry name" value="UPF0235 PROTEIN C15ORF40"/>
    <property type="match status" value="1"/>
</dbReference>
<dbReference type="PANTHER" id="PTHR13420:SF7">
    <property type="entry name" value="UPF0235 PROTEIN C15ORF40"/>
    <property type="match status" value="1"/>
</dbReference>
<dbReference type="Pfam" id="PF02594">
    <property type="entry name" value="DUF167"/>
    <property type="match status" value="1"/>
</dbReference>
<dbReference type="SMART" id="SM01152">
    <property type="entry name" value="DUF167"/>
    <property type="match status" value="1"/>
</dbReference>
<dbReference type="SUPFAM" id="SSF69786">
    <property type="entry name" value="YggU-like"/>
    <property type="match status" value="1"/>
</dbReference>